<proteinExistence type="inferred from homology"/>
<organism>
    <name type="scientific">Neisseria meningitidis serogroup C (strain 053442)</name>
    <dbReference type="NCBI Taxonomy" id="374833"/>
    <lineage>
        <taxon>Bacteria</taxon>
        <taxon>Pseudomonadati</taxon>
        <taxon>Pseudomonadota</taxon>
        <taxon>Betaproteobacteria</taxon>
        <taxon>Neisseriales</taxon>
        <taxon>Neisseriaceae</taxon>
        <taxon>Neisseria</taxon>
    </lineage>
</organism>
<dbReference type="EC" id="4.1.99.17" evidence="1"/>
<dbReference type="EMBL" id="CP000381">
    <property type="protein sequence ID" value="ABX72365.1"/>
    <property type="molecule type" value="Genomic_DNA"/>
</dbReference>
<dbReference type="RefSeq" id="WP_012221163.1">
    <property type="nucleotide sequence ID" value="NC_010120.1"/>
</dbReference>
<dbReference type="SMR" id="A9M0A4"/>
<dbReference type="KEGG" id="nmn:NMCC_0147"/>
<dbReference type="HOGENOM" id="CLU_013181_2_1_4"/>
<dbReference type="UniPathway" id="UPA00060"/>
<dbReference type="Proteomes" id="UP000001177">
    <property type="component" value="Chromosome"/>
</dbReference>
<dbReference type="GO" id="GO:0005829">
    <property type="term" value="C:cytosol"/>
    <property type="evidence" value="ECO:0007669"/>
    <property type="project" value="TreeGrafter"/>
</dbReference>
<dbReference type="GO" id="GO:0051539">
    <property type="term" value="F:4 iron, 4 sulfur cluster binding"/>
    <property type="evidence" value="ECO:0007669"/>
    <property type="project" value="UniProtKB-KW"/>
</dbReference>
<dbReference type="GO" id="GO:0016830">
    <property type="term" value="F:carbon-carbon lyase activity"/>
    <property type="evidence" value="ECO:0007669"/>
    <property type="project" value="InterPro"/>
</dbReference>
<dbReference type="GO" id="GO:0008270">
    <property type="term" value="F:zinc ion binding"/>
    <property type="evidence" value="ECO:0007669"/>
    <property type="project" value="UniProtKB-UniRule"/>
</dbReference>
<dbReference type="GO" id="GO:0009228">
    <property type="term" value="P:thiamine biosynthetic process"/>
    <property type="evidence" value="ECO:0007669"/>
    <property type="project" value="UniProtKB-KW"/>
</dbReference>
<dbReference type="GO" id="GO:0009229">
    <property type="term" value="P:thiamine diphosphate biosynthetic process"/>
    <property type="evidence" value="ECO:0007669"/>
    <property type="project" value="UniProtKB-UniRule"/>
</dbReference>
<dbReference type="FunFam" id="3.20.20.540:FF:000001">
    <property type="entry name" value="Phosphomethylpyrimidine synthase"/>
    <property type="match status" value="1"/>
</dbReference>
<dbReference type="Gene3D" id="6.10.250.620">
    <property type="match status" value="1"/>
</dbReference>
<dbReference type="Gene3D" id="3.20.20.540">
    <property type="entry name" value="Radical SAM ThiC family, central domain"/>
    <property type="match status" value="1"/>
</dbReference>
<dbReference type="HAMAP" id="MF_00089">
    <property type="entry name" value="ThiC"/>
    <property type="match status" value="1"/>
</dbReference>
<dbReference type="InterPro" id="IPR037509">
    <property type="entry name" value="ThiC"/>
</dbReference>
<dbReference type="InterPro" id="IPR025747">
    <property type="entry name" value="ThiC-associated_dom"/>
</dbReference>
<dbReference type="InterPro" id="IPR038521">
    <property type="entry name" value="ThiC/Bza_core_dom"/>
</dbReference>
<dbReference type="InterPro" id="IPR002817">
    <property type="entry name" value="ThiC/BzaA/B"/>
</dbReference>
<dbReference type="NCBIfam" id="NF006763">
    <property type="entry name" value="PRK09284.1"/>
    <property type="match status" value="1"/>
</dbReference>
<dbReference type="NCBIfam" id="NF009895">
    <property type="entry name" value="PRK13352.1"/>
    <property type="match status" value="1"/>
</dbReference>
<dbReference type="NCBIfam" id="TIGR00190">
    <property type="entry name" value="thiC"/>
    <property type="match status" value="1"/>
</dbReference>
<dbReference type="PANTHER" id="PTHR30557:SF1">
    <property type="entry name" value="PHOSPHOMETHYLPYRIMIDINE SYNTHASE, CHLOROPLASTIC"/>
    <property type="match status" value="1"/>
</dbReference>
<dbReference type="PANTHER" id="PTHR30557">
    <property type="entry name" value="THIAMINE BIOSYNTHESIS PROTEIN THIC"/>
    <property type="match status" value="1"/>
</dbReference>
<dbReference type="Pfam" id="PF13667">
    <property type="entry name" value="ThiC-associated"/>
    <property type="match status" value="1"/>
</dbReference>
<dbReference type="Pfam" id="PF01964">
    <property type="entry name" value="ThiC_Rad_SAM"/>
    <property type="match status" value="1"/>
</dbReference>
<dbReference type="SFLD" id="SFLDF00407">
    <property type="entry name" value="phosphomethylpyrimidine_syntha"/>
    <property type="match status" value="1"/>
</dbReference>
<dbReference type="SFLD" id="SFLDG01114">
    <property type="entry name" value="phosphomethylpyrimidine_syntha"/>
    <property type="match status" value="1"/>
</dbReference>
<dbReference type="SFLD" id="SFLDS00113">
    <property type="entry name" value="Radical_SAM_Phosphomethylpyrim"/>
    <property type="match status" value="1"/>
</dbReference>
<evidence type="ECO:0000255" key="1">
    <source>
        <dbReference type="HAMAP-Rule" id="MF_00089"/>
    </source>
</evidence>
<sequence>MTTPKKTAKTSGNEARELADLSEDIGIRFKYPNSERVYLQGSRDDIRVPLREIRQDDTYTAQGTEANPPIPVYDTSGVYGDPAAHIDLKQGLPHIRTAWLDERGDTEILPKLSSEYGIERAHDPKTAHLRFNQITRPRRAKAGRNVTQLHYARQGIITPEMEFVAIRERLKLDELSQKPEYAKLLKQHAGQSFGANIPTHPDQITPEFVRREIAAGRAIIPANINHPELEPMIIGRNFRVKINGNLGNSAVTSSLTEEVEKMVWSLRWGADTIMDLSTGAHIHETREWIIRNAPVPIGTVPIYQALEKTGGIAEDLTWDLFRDTLIEQAEQGVDYFTIHAGVLLRYVPMTANRLTGIVSRGGSIMAKWCLAHHRENFLYTHFDEICEIMKAYDVSFSLGDGLRPGCIADANDESQFAELHTLGELTSKAWKHDVQVMIEGPGHVPLQRVKENMTEELQHCFEAPFYTLGPLVTDIAPGYDHITSGIGAANIGWYGTAMLCYVTPKEHLGLPDKEDVRTGIITYKLAAHAADLAKGWPGAQLRDNALSKARFEFRWRDQFRLSLDPERAESFHDETLPAEGAKIAHFCSMCGPKFCSMKITQEVRDYADKQKAQRQGMEEKAVEFVKKGAKIYS</sequence>
<name>THIC_NEIM0</name>
<keyword id="KW-0004">4Fe-4S</keyword>
<keyword id="KW-0408">Iron</keyword>
<keyword id="KW-0411">Iron-sulfur</keyword>
<keyword id="KW-0456">Lyase</keyword>
<keyword id="KW-0479">Metal-binding</keyword>
<keyword id="KW-0949">S-adenosyl-L-methionine</keyword>
<keyword id="KW-0784">Thiamine biosynthesis</keyword>
<keyword id="KW-0862">Zinc</keyword>
<feature type="chain" id="PRO_1000075439" description="Phosphomethylpyrimidine synthase">
    <location>
        <begin position="1"/>
        <end position="633"/>
    </location>
</feature>
<feature type="binding site" evidence="1">
    <location>
        <position position="245"/>
    </location>
    <ligand>
        <name>substrate</name>
    </ligand>
</feature>
<feature type="binding site" evidence="1">
    <location>
        <position position="274"/>
    </location>
    <ligand>
        <name>substrate</name>
    </ligand>
</feature>
<feature type="binding site" evidence="1">
    <location>
        <position position="303"/>
    </location>
    <ligand>
        <name>substrate</name>
    </ligand>
</feature>
<feature type="binding site" evidence="1">
    <location>
        <position position="339"/>
    </location>
    <ligand>
        <name>substrate</name>
    </ligand>
</feature>
<feature type="binding site" evidence="1">
    <location>
        <begin position="359"/>
        <end position="361"/>
    </location>
    <ligand>
        <name>substrate</name>
    </ligand>
</feature>
<feature type="binding site" evidence="1">
    <location>
        <begin position="400"/>
        <end position="403"/>
    </location>
    <ligand>
        <name>substrate</name>
    </ligand>
</feature>
<feature type="binding site" evidence="1">
    <location>
        <position position="439"/>
    </location>
    <ligand>
        <name>substrate</name>
    </ligand>
</feature>
<feature type="binding site" evidence="1">
    <location>
        <position position="443"/>
    </location>
    <ligand>
        <name>Zn(2+)</name>
        <dbReference type="ChEBI" id="CHEBI:29105"/>
    </ligand>
</feature>
<feature type="binding site" evidence="1">
    <location>
        <position position="466"/>
    </location>
    <ligand>
        <name>substrate</name>
    </ligand>
</feature>
<feature type="binding site" evidence="1">
    <location>
        <position position="507"/>
    </location>
    <ligand>
        <name>Zn(2+)</name>
        <dbReference type="ChEBI" id="CHEBI:29105"/>
    </ligand>
</feature>
<feature type="binding site" evidence="1">
    <location>
        <position position="587"/>
    </location>
    <ligand>
        <name>[4Fe-4S] cluster</name>
        <dbReference type="ChEBI" id="CHEBI:49883"/>
        <note>4Fe-4S-S-AdoMet</note>
    </ligand>
</feature>
<feature type="binding site" evidence="1">
    <location>
        <position position="590"/>
    </location>
    <ligand>
        <name>[4Fe-4S] cluster</name>
        <dbReference type="ChEBI" id="CHEBI:49883"/>
        <note>4Fe-4S-S-AdoMet</note>
    </ligand>
</feature>
<feature type="binding site" evidence="1">
    <location>
        <position position="595"/>
    </location>
    <ligand>
        <name>[4Fe-4S] cluster</name>
        <dbReference type="ChEBI" id="CHEBI:49883"/>
        <note>4Fe-4S-S-AdoMet</note>
    </ligand>
</feature>
<protein>
    <recommendedName>
        <fullName evidence="1">Phosphomethylpyrimidine synthase</fullName>
        <ecNumber evidence="1">4.1.99.17</ecNumber>
    </recommendedName>
    <alternativeName>
        <fullName evidence="1">Hydroxymethylpyrimidine phosphate synthase</fullName>
        <shortName evidence="1">HMP-P synthase</shortName>
        <shortName evidence="1">HMP-phosphate synthase</shortName>
        <shortName evidence="1">HMPP synthase</shortName>
    </alternativeName>
    <alternativeName>
        <fullName evidence="1">Thiamine biosynthesis protein ThiC</fullName>
    </alternativeName>
</protein>
<reference key="1">
    <citation type="journal article" date="2008" name="Genomics">
        <title>Characterization of ST-4821 complex, a unique Neisseria meningitidis clone.</title>
        <authorList>
            <person name="Peng J."/>
            <person name="Yang L."/>
            <person name="Yang F."/>
            <person name="Yang J."/>
            <person name="Yan Y."/>
            <person name="Nie H."/>
            <person name="Zhang X."/>
            <person name="Xiong Z."/>
            <person name="Jiang Y."/>
            <person name="Cheng F."/>
            <person name="Xu X."/>
            <person name="Chen S."/>
            <person name="Sun L."/>
            <person name="Li W."/>
            <person name="Shen Y."/>
            <person name="Shao Z."/>
            <person name="Liang X."/>
            <person name="Xu J."/>
            <person name="Jin Q."/>
        </authorList>
    </citation>
    <scope>NUCLEOTIDE SEQUENCE [LARGE SCALE GENOMIC DNA]</scope>
    <source>
        <strain>053442</strain>
    </source>
</reference>
<comment type="function">
    <text evidence="1">Catalyzes the synthesis of the hydroxymethylpyrimidine phosphate (HMP-P) moiety of thiamine from aminoimidazole ribotide (AIR) in a radical S-adenosyl-L-methionine (SAM)-dependent reaction.</text>
</comment>
<comment type="catalytic activity">
    <reaction evidence="1">
        <text>5-amino-1-(5-phospho-beta-D-ribosyl)imidazole + S-adenosyl-L-methionine = 4-amino-2-methyl-5-(phosphooxymethyl)pyrimidine + CO + 5'-deoxyadenosine + formate + L-methionine + 3 H(+)</text>
        <dbReference type="Rhea" id="RHEA:24840"/>
        <dbReference type="ChEBI" id="CHEBI:15378"/>
        <dbReference type="ChEBI" id="CHEBI:15740"/>
        <dbReference type="ChEBI" id="CHEBI:17245"/>
        <dbReference type="ChEBI" id="CHEBI:17319"/>
        <dbReference type="ChEBI" id="CHEBI:57844"/>
        <dbReference type="ChEBI" id="CHEBI:58354"/>
        <dbReference type="ChEBI" id="CHEBI:59789"/>
        <dbReference type="ChEBI" id="CHEBI:137981"/>
        <dbReference type="EC" id="4.1.99.17"/>
    </reaction>
</comment>
<comment type="cofactor">
    <cofactor evidence="1">
        <name>[4Fe-4S] cluster</name>
        <dbReference type="ChEBI" id="CHEBI:49883"/>
    </cofactor>
    <text evidence="1">Binds 1 [4Fe-4S] cluster per subunit. The cluster is coordinated with 3 cysteines and an exchangeable S-adenosyl-L-methionine.</text>
</comment>
<comment type="pathway">
    <text evidence="1">Cofactor biosynthesis; thiamine diphosphate biosynthesis.</text>
</comment>
<comment type="subunit">
    <text evidence="1">Homodimer.</text>
</comment>
<comment type="similarity">
    <text evidence="1">Belongs to the ThiC family.</text>
</comment>
<gene>
    <name evidence="1" type="primary">thiC</name>
    <name type="ordered locus">NMCC_0147</name>
</gene>
<accession>A9M0A4</accession>